<accession>Q9LT02</accession>
<reference key="1">
    <citation type="journal article" date="2000" name="DNA Res.">
        <title>Structural analysis of Arabidopsis thaliana chromosome 5. X. Sequence features of the regions of 3,076,755 bp covered by sixty P1 and TAC clones.</title>
        <authorList>
            <person name="Sato S."/>
            <person name="Nakamura Y."/>
            <person name="Kaneko T."/>
            <person name="Katoh T."/>
            <person name="Asamizu E."/>
            <person name="Kotani H."/>
            <person name="Tabata S."/>
        </authorList>
    </citation>
    <scope>NUCLEOTIDE SEQUENCE [LARGE SCALE GENOMIC DNA]</scope>
    <source>
        <strain>cv. Columbia</strain>
    </source>
</reference>
<reference key="2">
    <citation type="journal article" date="2017" name="Plant J.">
        <title>Araport11: a complete reannotation of the Arabidopsis thaliana reference genome.</title>
        <authorList>
            <person name="Cheng C.Y."/>
            <person name="Krishnakumar V."/>
            <person name="Chan A.P."/>
            <person name="Thibaud-Nissen F."/>
            <person name="Schobel S."/>
            <person name="Town C.D."/>
        </authorList>
    </citation>
    <scope>GENOME REANNOTATION</scope>
    <source>
        <strain>cv. Columbia</strain>
    </source>
</reference>
<reference key="3">
    <citation type="journal article" date="2004" name="Genome Res.">
        <title>Whole genome sequence comparisons and 'full-length' cDNA sequences: a combined approach to evaluate and improve Arabidopsis genome annotation.</title>
        <authorList>
            <person name="Castelli V."/>
            <person name="Aury J.-M."/>
            <person name="Jaillon O."/>
            <person name="Wincker P."/>
            <person name="Clepet C."/>
            <person name="Menard M."/>
            <person name="Cruaud C."/>
            <person name="Quetier F."/>
            <person name="Scarpelli C."/>
            <person name="Schaechter V."/>
            <person name="Temple G."/>
            <person name="Caboche M."/>
            <person name="Weissenbach J."/>
            <person name="Salanoubat M."/>
        </authorList>
    </citation>
    <scope>NUCLEOTIDE SEQUENCE [LARGE SCALE MRNA] OF 702-1179</scope>
    <source>
        <strain>cv. Columbia</strain>
    </source>
</reference>
<reference key="4">
    <citation type="journal article" date="2004" name="Plant J.">
        <title>Arabidopsis pdr2 reveals a phosphate-sensitive checkpoint in root development.</title>
        <authorList>
            <person name="Ticconi C.A."/>
            <person name="Delatorre C.A."/>
            <person name="Lahner B."/>
            <person name="Salt D.E."/>
            <person name="Abel S."/>
        </authorList>
    </citation>
    <scope>FUNCTION</scope>
    <scope>DISRUPTION PHENOTYPE</scope>
</reference>
<reference key="5">
    <citation type="journal article" date="2005" name="Genes Dev.">
        <title>Pollen development and fertilization in Arabidopsis is dependent on the MALE GAMETOGENESIS IMPAIRED ANTHERS gene encoding a type V P-type ATPase.</title>
        <authorList>
            <person name="Jakobsen M.K."/>
            <person name="Poulsen L.R."/>
            <person name="Schulz A."/>
            <person name="Fleurat-Lessard P."/>
            <person name="Moller A."/>
            <person name="Husted S."/>
            <person name="Schiott M."/>
            <person name="Amtmann A."/>
            <person name="Palmgren M.G."/>
        </authorList>
    </citation>
    <scope>FUNCTION</scope>
    <scope>SUBCELLULAR LOCATION</scope>
    <scope>DISRUPTION PHENOTYPE</scope>
</reference>
<reference key="6">
    <citation type="journal article" date="2009" name="Proc. Natl. Acad. Sci. U.S.A.">
        <title>ER-resident proteins PDR2 and LPR1 mediate the developmental response of root meristems to phosphate availability.</title>
        <authorList>
            <person name="Ticconi C.A."/>
            <person name="Lucero R.D."/>
            <person name="Sakhonwasee S."/>
            <person name="Adamson A.W."/>
            <person name="Creff A."/>
            <person name="Nussaume L."/>
            <person name="Desnos T."/>
            <person name="Abel S."/>
        </authorList>
    </citation>
    <scope>FUNCTION</scope>
    <scope>SUBCELLULAR LOCATION</scope>
    <scope>TISSUE SPECIFICITY</scope>
    <scope>DISRUPTION PHENOTYPE</scope>
    <scope>MUTAGENESIS OF THR-699</scope>
</reference>
<gene>
    <name type="primary">PDR2</name>
    <name type="synonym">MIA</name>
    <name type="ordered locus">At5g23630</name>
    <name type="ORF">MQM1.11</name>
</gene>
<name>PDR2_ARATH</name>
<comment type="function">
    <text evidence="1 4 5 6">Mediates manganese transport into the endoplasmic reticulum. The ATPase activity is required for cellular manganese homeostasis (By similarity). Plays an important role in pollen and root development through its impact on protein secretion and transport processes. Functions together with LPR1 and LPR2 in a common pathway that adjusts root meristem activity to phosphate availability. Under phosphate limitation, restricts SHR movement in root meristem and is required for maintaining SCR expression in the root meristem stem-cell niche as well as for proximal meristem activity. Can complement the yeast spf1 mutant.</text>
</comment>
<comment type="catalytic activity">
    <reaction>
        <text>ATP + H2O = ADP + phosphate + H(+)</text>
        <dbReference type="Rhea" id="RHEA:13065"/>
        <dbReference type="ChEBI" id="CHEBI:15377"/>
        <dbReference type="ChEBI" id="CHEBI:15378"/>
        <dbReference type="ChEBI" id="CHEBI:30616"/>
        <dbReference type="ChEBI" id="CHEBI:43474"/>
        <dbReference type="ChEBI" id="CHEBI:456216"/>
    </reaction>
</comment>
<comment type="subcellular location">
    <subcellularLocation>
        <location evidence="5 6">Endoplasmic reticulum membrane</location>
        <topology evidence="5 6">Multi-pass membrane protein</topology>
    </subcellularLocation>
    <text>Found in secretory vesicles of the tapetum and developing pollen grains.</text>
</comment>
<comment type="tissue specificity">
    <text evidence="6">Highly expressed in root meristem. Expressed in pavement cells of trichomes, stipules, stamens and pollen grains.</text>
</comment>
<comment type="disruption phenotype">
    <text evidence="4 5 6">Imbalances in cation homeostasis and severe reduction in fertility. Increased inhibition of primary root growth in low inorganic phosphate conditions.</text>
</comment>
<comment type="similarity">
    <text evidence="7">Belongs to the cation transport ATPase (P-type) (TC 3.A.3) family. Type V subfamily.</text>
</comment>
<comment type="sequence caution" evidence="7">
    <conflict type="frameshift">
        <sequence resource="EMBL" id="BX831910"/>
    </conflict>
</comment>
<sequence>MSSFRVGGKVVEKVDLCRKKQLVWRLDVWPFAILYTVWLTTIVPSIDFSDACIALGGLSAFHILVLLFTTWSVDFKCFVQFSKVNSIDQADACKVTPAKFSGSKEVVPLHFRSQMTDSASSGDMEEIFFDFRKQRFIYSKELGAFSKLPYPTKETFGHYLKCTGHGTEAKIATATEKWGRNVFDYPQPTFQKLMKENCMEPFFVFQVFCVGLWCLDEFWYYSVFTLFMLFMFESTMAKSRLKTLTDLRSVRVDSQTVMVYRSGKWVKLLGTDLLPGDVVSIGRPSTQTGGEDKTVPADMLLLVGSAIVNEAILTGESTPQWKVPIVGQRSDEKLSIKRNKNHVLFGGTKILQHSPDKSFSLKTPDGGCLAVVLRTGFETSQGKLMRTILFSTERVTANSWESGLFILFLVVFAVIAAGYVLVKGLEDPTRSKYKLLLGCSLIITSVIPPELPMELSIAVNTSLLALVRRGIFCTEPFRIPFAGKVDLCCFDKTGTLTSDDMEFRGVGGLSNCEEAETDMSKVPVRTLEILASCHALVFVENKLVGDPLEKAALKGIDWSYKADEKALPRRGNGNSVQIMQRYHFASHLKRMSVIVRIQEEYLAFVKGAPETIQERLVDVPAQYIETYKRYTRQGSRVLALAYKRLPDMMVSEARDMDRDAVESDLTFAGFAVFNCPIRPDSAPVLLELKNSSHDLVMITGDQALTACHVAGQVHIVSNPVLILGRSGSGNEYKWVSPDEKEIIPYSEKEIETLAETHDLCIGGDSIEMLQATSAVLRVIPFVKVFARVAPQQKELILTTFKAVGRGTLMCGDGTNDVGALKQAHVGVALLNNKLPLSPSDSSKDDKSKSKKSKLPLEPASKTITQNGEGSSKGKIPPQNRHLTAAELQRQKLKKIMDDLNNDEGDGRSAPLVKLGDASMASPFTAKHASVAPVTDIIRQGRSTLVTTLQMFKILGLNCLATAYVLSVMYLDGVKLGDVQATISGVLTAAFFLFISHARPLQTLSAERPHPSVFSVYLFLSLIGQFAVHLTFLVYSVKEAEKHMPEECIEPDASFHPNLVNTVSYMVSMMLQVATFAVNYMGHPFNQSIRENKPFFYALIAGAGFFTVIASDLFRDLNDSLKLVPLPQGLRDKLLIWASLMFIICYSWERLLRWAFPGKISSWKHKQRAVTANLEKKKKV</sequence>
<proteinExistence type="evidence at protein level"/>
<organism>
    <name type="scientific">Arabidopsis thaliana</name>
    <name type="common">Mouse-ear cress</name>
    <dbReference type="NCBI Taxonomy" id="3702"/>
    <lineage>
        <taxon>Eukaryota</taxon>
        <taxon>Viridiplantae</taxon>
        <taxon>Streptophyta</taxon>
        <taxon>Embryophyta</taxon>
        <taxon>Tracheophyta</taxon>
        <taxon>Spermatophyta</taxon>
        <taxon>Magnoliopsida</taxon>
        <taxon>eudicotyledons</taxon>
        <taxon>Gunneridae</taxon>
        <taxon>Pentapetalae</taxon>
        <taxon>rosids</taxon>
        <taxon>malvids</taxon>
        <taxon>Brassicales</taxon>
        <taxon>Brassicaceae</taxon>
        <taxon>Camelineae</taxon>
        <taxon>Arabidopsis</taxon>
    </lineage>
</organism>
<keyword id="KW-0067">ATP-binding</keyword>
<keyword id="KW-0256">Endoplasmic reticulum</keyword>
<keyword id="KW-0460">Magnesium</keyword>
<keyword id="KW-0464">Manganese</keyword>
<keyword id="KW-0472">Membrane</keyword>
<keyword id="KW-0479">Metal-binding</keyword>
<keyword id="KW-0547">Nucleotide-binding</keyword>
<keyword id="KW-1185">Reference proteome</keyword>
<keyword id="KW-1278">Translocase</keyword>
<keyword id="KW-0812">Transmembrane</keyword>
<keyword id="KW-1133">Transmembrane helix</keyword>
<keyword id="KW-0813">Transport</keyword>
<feature type="chain" id="PRO_0000046420" description="Probable manganese-transporting ATPase PDR2">
    <location>
        <begin position="1"/>
        <end position="1179"/>
    </location>
</feature>
<feature type="topological domain" description="Cytoplasmic" evidence="2">
    <location>
        <begin position="1"/>
        <end position="20"/>
    </location>
</feature>
<feature type="transmembrane region" description="Helical" evidence="2">
    <location>
        <begin position="21"/>
        <end position="42"/>
    </location>
</feature>
<feature type="topological domain" description="Lumenal" evidence="2">
    <location>
        <begin position="43"/>
        <end position="50"/>
    </location>
</feature>
<feature type="transmembrane region" description="Helical" evidence="2">
    <location>
        <begin position="51"/>
        <end position="71"/>
    </location>
</feature>
<feature type="topological domain" description="Cytoplasmic" evidence="2">
    <location>
        <begin position="72"/>
        <end position="192"/>
    </location>
</feature>
<feature type="transmembrane region" description="Helical" evidence="2">
    <location>
        <begin position="193"/>
        <end position="215"/>
    </location>
</feature>
<feature type="topological domain" description="Lumenal" evidence="2">
    <location>
        <begin position="216"/>
        <end position="218"/>
    </location>
</feature>
<feature type="transmembrane region" description="Helical" evidence="2">
    <location>
        <begin position="219"/>
        <end position="238"/>
    </location>
</feature>
<feature type="topological domain" description="Cytoplasmic" evidence="2">
    <location>
        <begin position="239"/>
        <end position="402"/>
    </location>
</feature>
<feature type="transmembrane region" description="Helical" evidence="2">
    <location>
        <begin position="403"/>
        <end position="422"/>
    </location>
</feature>
<feature type="topological domain" description="Lumenal" evidence="2">
    <location>
        <begin position="423"/>
        <end position="435"/>
    </location>
</feature>
<feature type="transmembrane region" description="Helical" evidence="2">
    <location>
        <begin position="436"/>
        <end position="453"/>
    </location>
</feature>
<feature type="topological domain" description="Cytoplasmic" evidence="2">
    <location>
        <begin position="454"/>
        <end position="947"/>
    </location>
</feature>
<feature type="transmembrane region" description="Helical" evidence="2">
    <location>
        <begin position="948"/>
        <end position="967"/>
    </location>
</feature>
<feature type="topological domain" description="Lumenal" evidence="2">
    <location>
        <begin position="968"/>
        <end position="979"/>
    </location>
</feature>
<feature type="transmembrane region" description="Helical" evidence="2">
    <location>
        <begin position="980"/>
        <end position="997"/>
    </location>
</feature>
<feature type="topological domain" description="Cytoplasmic" evidence="2">
    <location>
        <begin position="998"/>
        <end position="1013"/>
    </location>
</feature>
<feature type="transmembrane region" description="Helical" evidence="2">
    <location>
        <begin position="1014"/>
        <end position="1034"/>
    </location>
</feature>
<feature type="topological domain" description="Lumenal" evidence="2">
    <location>
        <begin position="1035"/>
        <end position="1059"/>
    </location>
</feature>
<feature type="transmembrane region" description="Helical" evidence="2">
    <location>
        <begin position="1060"/>
        <end position="1079"/>
    </location>
</feature>
<feature type="topological domain" description="Cytoplasmic" evidence="2">
    <location>
        <begin position="1080"/>
        <end position="1092"/>
    </location>
</feature>
<feature type="transmembrane region" description="Helical" evidence="2">
    <location>
        <begin position="1093"/>
        <end position="1110"/>
    </location>
</feature>
<feature type="topological domain" description="Lumenal" evidence="2">
    <location>
        <begin position="1111"/>
        <end position="1128"/>
    </location>
</feature>
<feature type="transmembrane region" description="Helical" evidence="2">
    <location>
        <begin position="1129"/>
        <end position="1148"/>
    </location>
</feature>
<feature type="topological domain" description="Cytoplasmic" evidence="2">
    <location>
        <begin position="1149"/>
        <end position="1179"/>
    </location>
</feature>
<feature type="region of interest" description="Disordered" evidence="3">
    <location>
        <begin position="833"/>
        <end position="880"/>
    </location>
</feature>
<feature type="active site" description="4-aspartylphosphate intermediate" evidence="1">
    <location>
        <position position="491"/>
    </location>
</feature>
<feature type="binding site" evidence="1">
    <location>
        <position position="812"/>
    </location>
    <ligand>
        <name>Mg(2+)</name>
        <dbReference type="ChEBI" id="CHEBI:18420"/>
    </ligand>
</feature>
<feature type="binding site" evidence="1">
    <location>
        <position position="816"/>
    </location>
    <ligand>
        <name>Mg(2+)</name>
        <dbReference type="ChEBI" id="CHEBI:18420"/>
    </ligand>
</feature>
<feature type="mutagenesis site" description="In pdr2-1; increased inhibition of primary root growth in low inorganic phosphate conditions." evidence="6">
    <original>T</original>
    <variation>I</variation>
    <location>
        <position position="699"/>
    </location>
</feature>
<feature type="sequence conflict" description="In Ref. 3; BX831910." evidence="7" ref="3">
    <original>D</original>
    <variation>N</variation>
    <location>
        <position position="935"/>
    </location>
</feature>
<feature type="sequence conflict" description="In Ref. 3; BX831910." evidence="7" ref="3">
    <original>S</original>
    <variation>F</variation>
    <location>
        <position position="995"/>
    </location>
</feature>
<protein>
    <recommendedName>
        <fullName>Probable manganese-transporting ATPase PDR2</fullName>
        <ecNumber>7.2.2.-</ecNumber>
    </recommendedName>
    <alternativeName>
        <fullName>Protein MALE GAMETOGENESIS IMPAIRED ANTHERS</fullName>
    </alternativeName>
    <alternativeName>
        <fullName>Protein PHOSPHATE DEFICIENCY RESPONSE 2</fullName>
    </alternativeName>
</protein>
<dbReference type="EC" id="7.2.2.-"/>
<dbReference type="EMBL" id="AB025633">
    <property type="protein sequence ID" value="BAA97238.1"/>
    <property type="molecule type" value="Genomic_DNA"/>
</dbReference>
<dbReference type="EMBL" id="CP002688">
    <property type="protein sequence ID" value="AED93192.1"/>
    <property type="molecule type" value="Genomic_DNA"/>
</dbReference>
<dbReference type="EMBL" id="BX831910">
    <property type="status" value="NOT_ANNOTATED_CDS"/>
    <property type="molecule type" value="mRNA"/>
</dbReference>
<dbReference type="RefSeq" id="NP_197752.1">
    <property type="nucleotide sequence ID" value="NM_122268.5"/>
</dbReference>
<dbReference type="SMR" id="Q9LT02"/>
<dbReference type="BioGRID" id="17703">
    <property type="interactions" value="1"/>
</dbReference>
<dbReference type="FunCoup" id="Q9LT02">
    <property type="interactions" value="5024"/>
</dbReference>
<dbReference type="IntAct" id="Q9LT02">
    <property type="interactions" value="1"/>
</dbReference>
<dbReference type="STRING" id="3702.Q9LT02"/>
<dbReference type="TCDB" id="3.A.3.10.22">
    <property type="family name" value="the p-type atpase (p-atpase) superfamily"/>
</dbReference>
<dbReference type="MetOSite" id="Q9LT02"/>
<dbReference type="PaxDb" id="3702-AT5G23630.1"/>
<dbReference type="ProteomicsDB" id="251348"/>
<dbReference type="EnsemblPlants" id="AT5G23630.1">
    <property type="protein sequence ID" value="AT5G23630.1"/>
    <property type="gene ID" value="AT5G23630"/>
</dbReference>
<dbReference type="GeneID" id="832428"/>
<dbReference type="Gramene" id="AT5G23630.1">
    <property type="protein sequence ID" value="AT5G23630.1"/>
    <property type="gene ID" value="AT5G23630"/>
</dbReference>
<dbReference type="KEGG" id="ath:AT5G23630"/>
<dbReference type="Araport" id="AT5G23630"/>
<dbReference type="TAIR" id="AT5G23630">
    <property type="gene designation" value="PDR2"/>
</dbReference>
<dbReference type="eggNOG" id="KOG0209">
    <property type="taxonomic scope" value="Eukaryota"/>
</dbReference>
<dbReference type="HOGENOM" id="CLU_001828_4_1_1"/>
<dbReference type="InParanoid" id="Q9LT02"/>
<dbReference type="OMA" id="QKTKYVW"/>
<dbReference type="PhylomeDB" id="Q9LT02"/>
<dbReference type="PRO" id="PR:Q9LT02"/>
<dbReference type="Proteomes" id="UP000006548">
    <property type="component" value="Chromosome 5"/>
</dbReference>
<dbReference type="ExpressionAtlas" id="Q9LT02">
    <property type="expression patterns" value="baseline and differential"/>
</dbReference>
<dbReference type="GO" id="GO:0005783">
    <property type="term" value="C:endoplasmic reticulum"/>
    <property type="evidence" value="ECO:0000314"/>
    <property type="project" value="TAIR"/>
</dbReference>
<dbReference type="GO" id="GO:0005789">
    <property type="term" value="C:endoplasmic reticulum membrane"/>
    <property type="evidence" value="ECO:0007669"/>
    <property type="project" value="UniProtKB-SubCell"/>
</dbReference>
<dbReference type="GO" id="GO:0009536">
    <property type="term" value="C:plastid"/>
    <property type="evidence" value="ECO:0007005"/>
    <property type="project" value="TAIR"/>
</dbReference>
<dbReference type="GO" id="GO:0005524">
    <property type="term" value="F:ATP binding"/>
    <property type="evidence" value="ECO:0007669"/>
    <property type="project" value="UniProtKB-KW"/>
</dbReference>
<dbReference type="GO" id="GO:0016887">
    <property type="term" value="F:ATP hydrolysis activity"/>
    <property type="evidence" value="ECO:0007669"/>
    <property type="project" value="InterPro"/>
</dbReference>
<dbReference type="GO" id="GO:0046872">
    <property type="term" value="F:metal ion binding"/>
    <property type="evidence" value="ECO:0007669"/>
    <property type="project" value="UniProtKB-KW"/>
</dbReference>
<dbReference type="GO" id="GO:0140358">
    <property type="term" value="F:P-type transmembrane transporter activity"/>
    <property type="evidence" value="ECO:0007669"/>
    <property type="project" value="InterPro"/>
</dbReference>
<dbReference type="GO" id="GO:0016036">
    <property type="term" value="P:cellular response to phosphate starvation"/>
    <property type="evidence" value="ECO:0000315"/>
    <property type="project" value="TAIR"/>
</dbReference>
<dbReference type="GO" id="GO:0010073">
    <property type="term" value="P:meristem maintenance"/>
    <property type="evidence" value="ECO:0000315"/>
    <property type="project" value="TAIR"/>
</dbReference>
<dbReference type="GO" id="GO:0009846">
    <property type="term" value="P:pollen germination"/>
    <property type="evidence" value="ECO:0000315"/>
    <property type="project" value="TAIR"/>
</dbReference>
<dbReference type="GO" id="GO:0010152">
    <property type="term" value="P:pollen maturation"/>
    <property type="evidence" value="ECO:0000315"/>
    <property type="project" value="TAIR"/>
</dbReference>
<dbReference type="GO" id="GO:0048867">
    <property type="term" value="P:stem cell fate determination"/>
    <property type="evidence" value="ECO:0000315"/>
    <property type="project" value="TAIR"/>
</dbReference>
<dbReference type="CDD" id="cd07543">
    <property type="entry name" value="P-type_ATPase_cation"/>
    <property type="match status" value="1"/>
</dbReference>
<dbReference type="FunFam" id="2.70.150.10:FF:000027">
    <property type="entry name" value="Cation-transporting ATPase"/>
    <property type="match status" value="1"/>
</dbReference>
<dbReference type="FunFam" id="3.40.1110.10:FF:000027">
    <property type="entry name" value="Cation-transporting ATPase"/>
    <property type="match status" value="1"/>
</dbReference>
<dbReference type="FunFam" id="3.40.50.1000:FF:000109">
    <property type="entry name" value="Cation-transporting ATPase"/>
    <property type="match status" value="1"/>
</dbReference>
<dbReference type="Gene3D" id="3.40.1110.10">
    <property type="entry name" value="Calcium-transporting ATPase, cytoplasmic domain N"/>
    <property type="match status" value="1"/>
</dbReference>
<dbReference type="Gene3D" id="2.70.150.10">
    <property type="entry name" value="Calcium-transporting ATPase, cytoplasmic transduction domain A"/>
    <property type="match status" value="1"/>
</dbReference>
<dbReference type="Gene3D" id="3.40.50.1000">
    <property type="entry name" value="HAD superfamily/HAD-like"/>
    <property type="match status" value="1"/>
</dbReference>
<dbReference type="InterPro" id="IPR057255">
    <property type="entry name" value="2TM_P5A-ATPase"/>
</dbReference>
<dbReference type="InterPro" id="IPR023299">
    <property type="entry name" value="ATPase_P-typ_cyto_dom_N"/>
</dbReference>
<dbReference type="InterPro" id="IPR018303">
    <property type="entry name" value="ATPase_P-typ_P_site"/>
</dbReference>
<dbReference type="InterPro" id="IPR023298">
    <property type="entry name" value="ATPase_P-typ_TM_dom_sf"/>
</dbReference>
<dbReference type="InterPro" id="IPR008250">
    <property type="entry name" value="ATPase_P-typ_transduc_dom_A_sf"/>
</dbReference>
<dbReference type="InterPro" id="IPR036412">
    <property type="entry name" value="HAD-like_sf"/>
</dbReference>
<dbReference type="InterPro" id="IPR023214">
    <property type="entry name" value="HAD_sf"/>
</dbReference>
<dbReference type="InterPro" id="IPR006544">
    <property type="entry name" value="P-type_TPase_V"/>
</dbReference>
<dbReference type="InterPro" id="IPR047820">
    <property type="entry name" value="P5A-type_ATPase"/>
</dbReference>
<dbReference type="InterPro" id="IPR001757">
    <property type="entry name" value="P_typ_ATPase"/>
</dbReference>
<dbReference type="InterPro" id="IPR044492">
    <property type="entry name" value="P_typ_ATPase_HD_dom"/>
</dbReference>
<dbReference type="NCBIfam" id="TIGR01494">
    <property type="entry name" value="ATPase_P-type"/>
    <property type="match status" value="2"/>
</dbReference>
<dbReference type="NCBIfam" id="TIGR01657">
    <property type="entry name" value="P-ATPase-V"/>
    <property type="match status" value="1"/>
</dbReference>
<dbReference type="PANTHER" id="PTHR45630">
    <property type="entry name" value="CATION-TRANSPORTING ATPASE-RELATED"/>
    <property type="match status" value="1"/>
</dbReference>
<dbReference type="PANTHER" id="PTHR45630:SF7">
    <property type="entry name" value="ENDOPLASMIC RETICULUM TRANSMEMBRANE HELIX TRANSLOCASE"/>
    <property type="match status" value="1"/>
</dbReference>
<dbReference type="Pfam" id="PF23143">
    <property type="entry name" value="2TM_P5A-ATPase"/>
    <property type="match status" value="1"/>
</dbReference>
<dbReference type="Pfam" id="PF13246">
    <property type="entry name" value="Cation_ATPase"/>
    <property type="match status" value="1"/>
</dbReference>
<dbReference type="Pfam" id="PF00122">
    <property type="entry name" value="E1-E2_ATPase"/>
    <property type="match status" value="1"/>
</dbReference>
<dbReference type="PRINTS" id="PR00119">
    <property type="entry name" value="CATATPASE"/>
</dbReference>
<dbReference type="SFLD" id="SFLDG00002">
    <property type="entry name" value="C1.7:_P-type_atpase_like"/>
    <property type="match status" value="1"/>
</dbReference>
<dbReference type="SFLD" id="SFLDF00027">
    <property type="entry name" value="p-type_atpase"/>
    <property type="match status" value="1"/>
</dbReference>
<dbReference type="SUPFAM" id="SSF81653">
    <property type="entry name" value="Calcium ATPase, transduction domain A"/>
    <property type="match status" value="1"/>
</dbReference>
<dbReference type="SUPFAM" id="SSF81665">
    <property type="entry name" value="Calcium ATPase, transmembrane domain M"/>
    <property type="match status" value="1"/>
</dbReference>
<dbReference type="SUPFAM" id="SSF56784">
    <property type="entry name" value="HAD-like"/>
    <property type="match status" value="1"/>
</dbReference>
<dbReference type="SUPFAM" id="SSF81660">
    <property type="entry name" value="Metal cation-transporting ATPase, ATP-binding domain N"/>
    <property type="match status" value="1"/>
</dbReference>
<dbReference type="PROSITE" id="PS00154">
    <property type="entry name" value="ATPASE_E1_E2"/>
    <property type="match status" value="1"/>
</dbReference>
<evidence type="ECO:0000250" key="1"/>
<evidence type="ECO:0000255" key="2"/>
<evidence type="ECO:0000256" key="3">
    <source>
        <dbReference type="SAM" id="MobiDB-lite"/>
    </source>
</evidence>
<evidence type="ECO:0000269" key="4">
    <source>
    </source>
</evidence>
<evidence type="ECO:0000269" key="5">
    <source>
    </source>
</evidence>
<evidence type="ECO:0000269" key="6">
    <source>
    </source>
</evidence>
<evidence type="ECO:0000305" key="7"/>